<evidence type="ECO:0000255" key="1">
    <source>
        <dbReference type="HAMAP-Rule" id="MF_00279"/>
    </source>
</evidence>
<feature type="chain" id="PRO_0000231856" description="Pyridoxine 5'-phosphate synthase">
    <location>
        <begin position="1"/>
        <end position="262"/>
    </location>
</feature>
<feature type="active site" description="Proton acceptor" evidence="1">
    <location>
        <position position="42"/>
    </location>
</feature>
<feature type="active site" description="Proton acceptor" evidence="1">
    <location>
        <position position="69"/>
    </location>
</feature>
<feature type="active site" description="Proton donor" evidence="1">
    <location>
        <position position="213"/>
    </location>
</feature>
<feature type="binding site" evidence="1">
    <location>
        <position position="6"/>
    </location>
    <ligand>
        <name>3-amino-2-oxopropyl phosphate</name>
        <dbReference type="ChEBI" id="CHEBI:57279"/>
    </ligand>
</feature>
<feature type="binding site" evidence="1">
    <location>
        <begin position="8"/>
        <end position="9"/>
    </location>
    <ligand>
        <name>1-deoxy-D-xylulose 5-phosphate</name>
        <dbReference type="ChEBI" id="CHEBI:57792"/>
    </ligand>
</feature>
<feature type="binding site" evidence="1">
    <location>
        <position position="17"/>
    </location>
    <ligand>
        <name>3-amino-2-oxopropyl phosphate</name>
        <dbReference type="ChEBI" id="CHEBI:57279"/>
    </ligand>
</feature>
<feature type="binding site" evidence="1">
    <location>
        <position position="44"/>
    </location>
    <ligand>
        <name>1-deoxy-D-xylulose 5-phosphate</name>
        <dbReference type="ChEBI" id="CHEBI:57792"/>
    </ligand>
</feature>
<feature type="binding site" evidence="1">
    <location>
        <position position="49"/>
    </location>
    <ligand>
        <name>1-deoxy-D-xylulose 5-phosphate</name>
        <dbReference type="ChEBI" id="CHEBI:57792"/>
    </ligand>
</feature>
<feature type="binding site" evidence="1">
    <location>
        <position position="99"/>
    </location>
    <ligand>
        <name>1-deoxy-D-xylulose 5-phosphate</name>
        <dbReference type="ChEBI" id="CHEBI:57792"/>
    </ligand>
</feature>
<feature type="binding site" evidence="1">
    <location>
        <position position="214"/>
    </location>
    <ligand>
        <name>3-amino-2-oxopropyl phosphate</name>
        <dbReference type="ChEBI" id="CHEBI:57279"/>
    </ligand>
</feature>
<feature type="binding site" evidence="1">
    <location>
        <begin position="235"/>
        <end position="236"/>
    </location>
    <ligand>
        <name>3-amino-2-oxopropyl phosphate</name>
        <dbReference type="ChEBI" id="CHEBI:57279"/>
    </ligand>
</feature>
<feature type="site" description="Transition state stabilizer" evidence="1">
    <location>
        <position position="150"/>
    </location>
</feature>
<reference key="1">
    <citation type="journal article" date="2003" name="Proc. Natl. Acad. Sci. U.S.A.">
        <title>Complete genome sequence and analysis of Wolinella succinogenes.</title>
        <authorList>
            <person name="Baar C."/>
            <person name="Eppinger M."/>
            <person name="Raddatz G."/>
            <person name="Simon J."/>
            <person name="Lanz C."/>
            <person name="Klimmek O."/>
            <person name="Nandakumar R."/>
            <person name="Gross R."/>
            <person name="Rosinus A."/>
            <person name="Keller H."/>
            <person name="Jagtap P."/>
            <person name="Linke B."/>
            <person name="Meyer F."/>
            <person name="Lederer H."/>
            <person name="Schuster S.C."/>
        </authorList>
    </citation>
    <scope>NUCLEOTIDE SEQUENCE [LARGE SCALE GENOMIC DNA]</scope>
    <source>
        <strain>ATCC 29543 / DSM 1740 / CCUG 13145 / JCM 31913 / LMG 7466 / NCTC 11488 / FDC 602W</strain>
    </source>
</reference>
<keyword id="KW-0963">Cytoplasm</keyword>
<keyword id="KW-0664">Pyridoxine biosynthesis</keyword>
<keyword id="KW-1185">Reference proteome</keyword>
<keyword id="KW-0808">Transferase</keyword>
<organism>
    <name type="scientific">Wolinella succinogenes (strain ATCC 29543 / DSM 1740 / CCUG 13145 / JCM 31913 / LMG 7466 / NCTC 11488 / FDC 602W)</name>
    <name type="common">Vibrio succinogenes</name>
    <dbReference type="NCBI Taxonomy" id="273121"/>
    <lineage>
        <taxon>Bacteria</taxon>
        <taxon>Pseudomonadati</taxon>
        <taxon>Campylobacterota</taxon>
        <taxon>Epsilonproteobacteria</taxon>
        <taxon>Campylobacterales</taxon>
        <taxon>Helicobacteraceae</taxon>
        <taxon>Wolinella</taxon>
    </lineage>
</organism>
<protein>
    <recommendedName>
        <fullName evidence="1">Pyridoxine 5'-phosphate synthase</fullName>
        <shortName evidence="1">PNP synthase</shortName>
        <ecNumber evidence="1">2.6.99.2</ecNumber>
    </recommendedName>
</protein>
<proteinExistence type="inferred from homology"/>
<comment type="function">
    <text evidence="1">Catalyzes the complicated ring closure reaction between the two acyclic compounds 1-deoxy-D-xylulose-5-phosphate (DXP) and 3-amino-2-oxopropyl phosphate (1-amino-acetone-3-phosphate or AAP) to form pyridoxine 5'-phosphate (PNP) and inorganic phosphate.</text>
</comment>
<comment type="catalytic activity">
    <reaction evidence="1">
        <text>3-amino-2-oxopropyl phosphate + 1-deoxy-D-xylulose 5-phosphate = pyridoxine 5'-phosphate + phosphate + 2 H2O + H(+)</text>
        <dbReference type="Rhea" id="RHEA:15265"/>
        <dbReference type="ChEBI" id="CHEBI:15377"/>
        <dbReference type="ChEBI" id="CHEBI:15378"/>
        <dbReference type="ChEBI" id="CHEBI:43474"/>
        <dbReference type="ChEBI" id="CHEBI:57279"/>
        <dbReference type="ChEBI" id="CHEBI:57792"/>
        <dbReference type="ChEBI" id="CHEBI:58589"/>
        <dbReference type="EC" id="2.6.99.2"/>
    </reaction>
</comment>
<comment type="pathway">
    <text evidence="1">Cofactor biosynthesis; pyridoxine 5'-phosphate biosynthesis; pyridoxine 5'-phosphate from D-erythrose 4-phosphate: step 5/5.</text>
</comment>
<comment type="subunit">
    <text evidence="1">Homooctamer; tetramer of dimers.</text>
</comment>
<comment type="subcellular location">
    <subcellularLocation>
        <location evidence="1">Cytoplasm</location>
    </subcellularLocation>
</comment>
<comment type="similarity">
    <text evidence="1">Belongs to the PNP synthase family.</text>
</comment>
<gene>
    <name evidence="1" type="primary">pdxJ</name>
    <name type="ordered locus">WS0105</name>
</gene>
<name>PDXJ_WOLSU</name>
<dbReference type="EC" id="2.6.99.2" evidence="1"/>
<dbReference type="EMBL" id="BX571657">
    <property type="protein sequence ID" value="CAE09272.1"/>
    <property type="molecule type" value="Genomic_DNA"/>
</dbReference>
<dbReference type="RefSeq" id="WP_011138072.1">
    <property type="nucleotide sequence ID" value="NC_005090.1"/>
</dbReference>
<dbReference type="SMR" id="Q7MAP8"/>
<dbReference type="STRING" id="273121.WS0105"/>
<dbReference type="KEGG" id="wsu:WS0105"/>
<dbReference type="eggNOG" id="COG0854">
    <property type="taxonomic scope" value="Bacteria"/>
</dbReference>
<dbReference type="HOGENOM" id="CLU_074563_0_0_7"/>
<dbReference type="UniPathway" id="UPA00244">
    <property type="reaction ID" value="UER00313"/>
</dbReference>
<dbReference type="Proteomes" id="UP000000422">
    <property type="component" value="Chromosome"/>
</dbReference>
<dbReference type="GO" id="GO:0005829">
    <property type="term" value="C:cytosol"/>
    <property type="evidence" value="ECO:0007669"/>
    <property type="project" value="TreeGrafter"/>
</dbReference>
<dbReference type="GO" id="GO:0033856">
    <property type="term" value="F:pyridoxine 5'-phosphate synthase activity"/>
    <property type="evidence" value="ECO:0007669"/>
    <property type="project" value="UniProtKB-EC"/>
</dbReference>
<dbReference type="GO" id="GO:0008615">
    <property type="term" value="P:pyridoxine biosynthetic process"/>
    <property type="evidence" value="ECO:0007669"/>
    <property type="project" value="UniProtKB-UniRule"/>
</dbReference>
<dbReference type="CDD" id="cd00003">
    <property type="entry name" value="PNPsynthase"/>
    <property type="match status" value="1"/>
</dbReference>
<dbReference type="Gene3D" id="3.20.20.70">
    <property type="entry name" value="Aldolase class I"/>
    <property type="match status" value="1"/>
</dbReference>
<dbReference type="HAMAP" id="MF_00279">
    <property type="entry name" value="PdxJ"/>
    <property type="match status" value="1"/>
</dbReference>
<dbReference type="InterPro" id="IPR013785">
    <property type="entry name" value="Aldolase_TIM"/>
</dbReference>
<dbReference type="InterPro" id="IPR004569">
    <property type="entry name" value="PyrdxlP_synth_PdxJ"/>
</dbReference>
<dbReference type="InterPro" id="IPR036130">
    <property type="entry name" value="Pyridoxine-5'_phos_synth"/>
</dbReference>
<dbReference type="NCBIfam" id="TIGR00559">
    <property type="entry name" value="pdxJ"/>
    <property type="match status" value="1"/>
</dbReference>
<dbReference type="NCBIfam" id="NF003625">
    <property type="entry name" value="PRK05265.1-3"/>
    <property type="match status" value="1"/>
</dbReference>
<dbReference type="NCBIfam" id="NF003627">
    <property type="entry name" value="PRK05265.1-5"/>
    <property type="match status" value="1"/>
</dbReference>
<dbReference type="PANTHER" id="PTHR30456">
    <property type="entry name" value="PYRIDOXINE 5'-PHOSPHATE SYNTHASE"/>
    <property type="match status" value="1"/>
</dbReference>
<dbReference type="PANTHER" id="PTHR30456:SF0">
    <property type="entry name" value="PYRIDOXINE 5'-PHOSPHATE SYNTHASE"/>
    <property type="match status" value="1"/>
</dbReference>
<dbReference type="Pfam" id="PF03740">
    <property type="entry name" value="PdxJ"/>
    <property type="match status" value="1"/>
</dbReference>
<dbReference type="SUPFAM" id="SSF63892">
    <property type="entry name" value="Pyridoxine 5'-phosphate synthase"/>
    <property type="match status" value="1"/>
</dbReference>
<accession>Q7MAP8</accession>
<sequence>MLLGVNIDHIATLREARKINEPDPLEAVFLAKRAGAFQITIHLREDRRHIHDYDVERIVESSFLPVNVECSTDKQIVDLLCELRPHRITLVPEKREEVTTEGGLDLLGRFEILKSRIAQFRENDIAVSLFVDPDITSIELSKELGADMVELHTGTFANLHLMLRSNLPKTPHAIPALEMDRRSLSLAYRESLLTLQKAAQKANTLGIEVAAGHGLNYQNVSEIVKIPEIIELNIGHSLIARSIFTGFEAAVREMVELLGRGD</sequence>